<name>EMTA_ECOK1</name>
<sequence>MKLRWFAFLIVLLAGCSSKHDYTNPPWNAKVPVQRAMQWMPISQKAGAAWGVDPQLITAIIAIESGGNPNAVSKSNAIGLMQIKASTSGRDVYRRMGWSGEPTTSELKNPERNISMGAAYLNILETGPLAGIEDPKVLQYALVVSYANGAGALLRTFSSDRKKAISKINDLDADEFLDHVARNHPAPQAPRYIYKLEQALDAM</sequence>
<accession>A1AAB6</accession>
<feature type="signal peptide" evidence="1">
    <location>
        <begin position="1"/>
        <end position="15"/>
    </location>
</feature>
<feature type="chain" id="PRO_0000312907" description="Endo-type membrane-bound lytic murein transglycosylase A">
    <location>
        <begin position="16"/>
        <end position="203"/>
    </location>
</feature>
<feature type="lipid moiety-binding region" description="N-palmitoyl cysteine" evidence="1">
    <location>
        <position position="16"/>
    </location>
</feature>
<feature type="lipid moiety-binding region" description="S-diacylglycerol cysteine" evidence="1">
    <location>
        <position position="16"/>
    </location>
</feature>
<evidence type="ECO:0000255" key="1">
    <source>
        <dbReference type="HAMAP-Rule" id="MF_01381"/>
    </source>
</evidence>
<evidence type="ECO:0000305" key="2"/>
<protein>
    <recommendedName>
        <fullName evidence="1">Endo-type membrane-bound lytic murein transglycosylase A</fullName>
        <ecNumber evidence="1">4.2.2.n2</ecNumber>
    </recommendedName>
    <alternativeName>
        <fullName evidence="1">Peptidoglycan lytic endotransglycosylase</fullName>
    </alternativeName>
</protein>
<dbReference type="EC" id="4.2.2.n2" evidence="1"/>
<dbReference type="EMBL" id="CP000468">
    <property type="protein sequence ID" value="ABJ00606.1"/>
    <property type="status" value="ALT_INIT"/>
    <property type="molecule type" value="Genomic_DNA"/>
</dbReference>
<dbReference type="RefSeq" id="WP_001295994.1">
    <property type="nucleotide sequence ID" value="NZ_CADILS010000001.1"/>
</dbReference>
<dbReference type="SMR" id="A1AAB6"/>
<dbReference type="CAZy" id="GH23">
    <property type="family name" value="Glycoside Hydrolase Family 23"/>
</dbReference>
<dbReference type="KEGG" id="ecv:APECO1_305"/>
<dbReference type="HOGENOM" id="CLU_103257_0_0_6"/>
<dbReference type="Proteomes" id="UP000008216">
    <property type="component" value="Chromosome"/>
</dbReference>
<dbReference type="GO" id="GO:0009279">
    <property type="term" value="C:cell outer membrane"/>
    <property type="evidence" value="ECO:0007669"/>
    <property type="project" value="UniProtKB-SubCell"/>
</dbReference>
<dbReference type="GO" id="GO:0008932">
    <property type="term" value="F:lytic endotransglycosylase activity"/>
    <property type="evidence" value="ECO:0007669"/>
    <property type="project" value="InterPro"/>
</dbReference>
<dbReference type="GO" id="GO:0016998">
    <property type="term" value="P:cell wall macromolecule catabolic process"/>
    <property type="evidence" value="ECO:0007669"/>
    <property type="project" value="UniProtKB-UniRule"/>
</dbReference>
<dbReference type="GO" id="GO:0071555">
    <property type="term" value="P:cell wall organization"/>
    <property type="evidence" value="ECO:0007669"/>
    <property type="project" value="UniProtKB-KW"/>
</dbReference>
<dbReference type="GO" id="GO:0000270">
    <property type="term" value="P:peptidoglycan metabolic process"/>
    <property type="evidence" value="ECO:0007669"/>
    <property type="project" value="InterPro"/>
</dbReference>
<dbReference type="CDD" id="cd16893">
    <property type="entry name" value="LT_MltC_MltE"/>
    <property type="match status" value="1"/>
</dbReference>
<dbReference type="FunFam" id="1.10.530.10:FF:000007">
    <property type="entry name" value="Endo-type membrane-bound lytic murein transglycosylase A"/>
    <property type="match status" value="1"/>
</dbReference>
<dbReference type="Gene3D" id="1.10.530.10">
    <property type="match status" value="1"/>
</dbReference>
<dbReference type="HAMAP" id="MF_01381">
    <property type="entry name" value="EmtA"/>
    <property type="match status" value="1"/>
</dbReference>
<dbReference type="InterPro" id="IPR023946">
    <property type="entry name" value="EmtA"/>
</dbReference>
<dbReference type="InterPro" id="IPR023346">
    <property type="entry name" value="Lysozyme-like_dom_sf"/>
</dbReference>
<dbReference type="InterPro" id="IPR000189">
    <property type="entry name" value="Transglyc_AS"/>
</dbReference>
<dbReference type="InterPro" id="IPR008258">
    <property type="entry name" value="Transglycosylase_SLT_dom_1"/>
</dbReference>
<dbReference type="NCBIfam" id="NF012014">
    <property type="entry name" value="PRK15470.1"/>
    <property type="match status" value="1"/>
</dbReference>
<dbReference type="PANTHER" id="PTHR37423:SF4">
    <property type="entry name" value="ENDO-TYPE MEMBRANE-BOUND LYTIC MUREIN TRANSGLYCOSYLASE A"/>
    <property type="match status" value="1"/>
</dbReference>
<dbReference type="PANTHER" id="PTHR37423">
    <property type="entry name" value="SOLUBLE LYTIC MUREIN TRANSGLYCOSYLASE-RELATED"/>
    <property type="match status" value="1"/>
</dbReference>
<dbReference type="Pfam" id="PF01464">
    <property type="entry name" value="SLT"/>
    <property type="match status" value="1"/>
</dbReference>
<dbReference type="SUPFAM" id="SSF53955">
    <property type="entry name" value="Lysozyme-like"/>
    <property type="match status" value="1"/>
</dbReference>
<dbReference type="PROSITE" id="PS51257">
    <property type="entry name" value="PROKAR_LIPOPROTEIN"/>
    <property type="match status" value="1"/>
</dbReference>
<dbReference type="PROSITE" id="PS00922">
    <property type="entry name" value="TRANSGLYCOSYLASE"/>
    <property type="match status" value="1"/>
</dbReference>
<proteinExistence type="inferred from homology"/>
<gene>
    <name evidence="1" type="primary">emtA</name>
    <name type="synonym">mltE</name>
    <name type="ordered locus">Ecok1_11120</name>
    <name type="ORF">APECO1_305</name>
</gene>
<organism>
    <name type="scientific">Escherichia coli O1:K1 / APEC</name>
    <dbReference type="NCBI Taxonomy" id="405955"/>
    <lineage>
        <taxon>Bacteria</taxon>
        <taxon>Pseudomonadati</taxon>
        <taxon>Pseudomonadota</taxon>
        <taxon>Gammaproteobacteria</taxon>
        <taxon>Enterobacterales</taxon>
        <taxon>Enterobacteriaceae</taxon>
        <taxon>Escherichia</taxon>
    </lineage>
</organism>
<comment type="function">
    <text evidence="1">Murein-degrading enzyme. May play a role in recycling of muropeptides during cell elongation and/or cell division. Preferentially cleaves at a distance of more than two disaccharide units from the ends of the glycan chain.</text>
</comment>
<comment type="catalytic activity">
    <reaction evidence="1">
        <text>Endolytic cleavage of the (1-&gt;4)-beta-glycosidic linkage between N-acetylmuramic acid (MurNAc) and N-acetylglucosamine (GlcNAc) residues in peptidoglycan with concomitant formation of a 1,6-anhydrobond in the MurNAc residue.</text>
        <dbReference type="EC" id="4.2.2.n2"/>
    </reaction>
</comment>
<comment type="subcellular location">
    <subcellularLocation>
        <location evidence="1">Cell outer membrane</location>
        <topology evidence="1">Lipid-anchor</topology>
    </subcellularLocation>
</comment>
<comment type="similarity">
    <text evidence="1">Belongs to the transglycosylase Slt family.</text>
</comment>
<comment type="sequence caution" evidence="2">
    <conflict type="erroneous initiation">
        <sequence resource="EMBL-CDS" id="ABJ00606"/>
    </conflict>
</comment>
<keyword id="KW-0998">Cell outer membrane</keyword>
<keyword id="KW-0961">Cell wall biogenesis/degradation</keyword>
<keyword id="KW-0449">Lipoprotein</keyword>
<keyword id="KW-0456">Lyase</keyword>
<keyword id="KW-0472">Membrane</keyword>
<keyword id="KW-0564">Palmitate</keyword>
<keyword id="KW-1185">Reference proteome</keyword>
<keyword id="KW-0732">Signal</keyword>
<reference key="1">
    <citation type="journal article" date="2007" name="J. Bacteriol.">
        <title>The genome sequence of avian pathogenic Escherichia coli strain O1:K1:H7 shares strong similarities with human extraintestinal pathogenic E. coli genomes.</title>
        <authorList>
            <person name="Johnson T.J."/>
            <person name="Kariyawasam S."/>
            <person name="Wannemuehler Y."/>
            <person name="Mangiamele P."/>
            <person name="Johnson S.J."/>
            <person name="Doetkott C."/>
            <person name="Skyberg J.A."/>
            <person name="Lynne A.M."/>
            <person name="Johnson J.R."/>
            <person name="Nolan L.K."/>
        </authorList>
    </citation>
    <scope>NUCLEOTIDE SEQUENCE [LARGE SCALE GENOMIC DNA]</scope>
</reference>